<accession>A4XKI9</accession>
<protein>
    <recommendedName>
        <fullName evidence="1">Endoribonuclease YbeY</fullName>
        <ecNumber evidence="1">3.1.-.-</ecNumber>
    </recommendedName>
</protein>
<gene>
    <name evidence="1" type="primary">ybeY</name>
    <name type="ordered locus">Csac_1839</name>
</gene>
<comment type="function">
    <text evidence="1">Single strand-specific metallo-endoribonuclease involved in late-stage 70S ribosome quality control and in maturation of the 3' terminus of the 16S rRNA.</text>
</comment>
<comment type="cofactor">
    <cofactor evidence="1">
        <name>Zn(2+)</name>
        <dbReference type="ChEBI" id="CHEBI:29105"/>
    </cofactor>
    <text evidence="1">Binds 1 zinc ion.</text>
</comment>
<comment type="subcellular location">
    <subcellularLocation>
        <location evidence="1">Cytoplasm</location>
    </subcellularLocation>
</comment>
<comment type="similarity">
    <text evidence="1">Belongs to the endoribonuclease YbeY family.</text>
</comment>
<reference key="1">
    <citation type="submission" date="2007-04" db="EMBL/GenBank/DDBJ databases">
        <title>Genome sequence of the thermophilic hydrogen-producing bacterium Caldicellulosiruptor saccharolyticus DSM 8903.</title>
        <authorList>
            <person name="Copeland A."/>
            <person name="Lucas S."/>
            <person name="Lapidus A."/>
            <person name="Barry K."/>
            <person name="Detter J.C."/>
            <person name="Glavina del Rio T."/>
            <person name="Hammon N."/>
            <person name="Israni S."/>
            <person name="Dalin E."/>
            <person name="Tice H."/>
            <person name="Pitluck S."/>
            <person name="Kiss H."/>
            <person name="Brettin T."/>
            <person name="Bruce D."/>
            <person name="Han C."/>
            <person name="Schmutz J."/>
            <person name="Larimer F."/>
            <person name="Land M."/>
            <person name="Hauser L."/>
            <person name="Kyrpides N."/>
            <person name="Lykidis A."/>
            <person name="van de Werken H.J.G."/>
            <person name="Verhaart M.R.A."/>
            <person name="VanFossen A.L."/>
            <person name="Lewis D.L."/>
            <person name="Nichols J.D."/>
            <person name="Goorissen H.P."/>
            <person name="van Niel E.W.J."/>
            <person name="Stams F.J.M."/>
            <person name="Willquist K.U."/>
            <person name="Ward D.E."/>
            <person name="van der Oost J."/>
            <person name="Kelly R.M."/>
            <person name="Kengen S.M.W."/>
            <person name="Richardson P."/>
        </authorList>
    </citation>
    <scope>NUCLEOTIDE SEQUENCE [LARGE SCALE GENOMIC DNA]</scope>
    <source>
        <strain>ATCC 43494 / DSM 8903 / Tp8T 6331</strain>
    </source>
</reference>
<name>YBEY_CALS8</name>
<sequence length="158" mass="18602">MKIIIQNQQDKYQIDESISKIIEDSVLNTLKIFMDDENYEISVMIVDNQFIKELNKHYRSIDKETDVLSFPIFEFKNGELQEDIAIVEEEIPLGDIVISIEKAYEQAKEFGHSVEREIAYLTVHSVLHLLGFDHIEEEDRMLMRKYEEMVLEGMGLTR</sequence>
<organism>
    <name type="scientific">Caldicellulosiruptor saccharolyticus (strain ATCC 43494 / DSM 8903 / Tp8T 6331)</name>
    <dbReference type="NCBI Taxonomy" id="351627"/>
    <lineage>
        <taxon>Bacteria</taxon>
        <taxon>Bacillati</taxon>
        <taxon>Bacillota</taxon>
        <taxon>Bacillota incertae sedis</taxon>
        <taxon>Caldicellulosiruptorales</taxon>
        <taxon>Caldicellulosiruptoraceae</taxon>
        <taxon>Caldicellulosiruptor</taxon>
    </lineage>
</organism>
<evidence type="ECO:0000255" key="1">
    <source>
        <dbReference type="HAMAP-Rule" id="MF_00009"/>
    </source>
</evidence>
<keyword id="KW-0963">Cytoplasm</keyword>
<keyword id="KW-0255">Endonuclease</keyword>
<keyword id="KW-0378">Hydrolase</keyword>
<keyword id="KW-0479">Metal-binding</keyword>
<keyword id="KW-0540">Nuclease</keyword>
<keyword id="KW-0690">Ribosome biogenesis</keyword>
<keyword id="KW-0698">rRNA processing</keyword>
<keyword id="KW-0862">Zinc</keyword>
<feature type="chain" id="PRO_1000057067" description="Endoribonuclease YbeY">
    <location>
        <begin position="1"/>
        <end position="158"/>
    </location>
</feature>
<feature type="binding site" evidence="1">
    <location>
        <position position="124"/>
    </location>
    <ligand>
        <name>Zn(2+)</name>
        <dbReference type="ChEBI" id="CHEBI:29105"/>
        <note>catalytic</note>
    </ligand>
</feature>
<feature type="binding site" evidence="1">
    <location>
        <position position="128"/>
    </location>
    <ligand>
        <name>Zn(2+)</name>
        <dbReference type="ChEBI" id="CHEBI:29105"/>
        <note>catalytic</note>
    </ligand>
</feature>
<feature type="binding site" evidence="1">
    <location>
        <position position="134"/>
    </location>
    <ligand>
        <name>Zn(2+)</name>
        <dbReference type="ChEBI" id="CHEBI:29105"/>
        <note>catalytic</note>
    </ligand>
</feature>
<proteinExistence type="inferred from homology"/>
<dbReference type="EC" id="3.1.-.-" evidence="1"/>
<dbReference type="EMBL" id="CP000679">
    <property type="protein sequence ID" value="ABP67424.1"/>
    <property type="molecule type" value="Genomic_DNA"/>
</dbReference>
<dbReference type="RefSeq" id="WP_011917358.1">
    <property type="nucleotide sequence ID" value="NC_009437.1"/>
</dbReference>
<dbReference type="SMR" id="A4XKI9"/>
<dbReference type="STRING" id="351627.Csac_1839"/>
<dbReference type="KEGG" id="csc:Csac_1839"/>
<dbReference type="eggNOG" id="COG0319">
    <property type="taxonomic scope" value="Bacteria"/>
</dbReference>
<dbReference type="HOGENOM" id="CLU_106710_3_0_9"/>
<dbReference type="OrthoDB" id="9807740at2"/>
<dbReference type="Proteomes" id="UP000000256">
    <property type="component" value="Chromosome"/>
</dbReference>
<dbReference type="GO" id="GO:0005737">
    <property type="term" value="C:cytoplasm"/>
    <property type="evidence" value="ECO:0007669"/>
    <property type="project" value="UniProtKB-SubCell"/>
</dbReference>
<dbReference type="GO" id="GO:0004222">
    <property type="term" value="F:metalloendopeptidase activity"/>
    <property type="evidence" value="ECO:0007669"/>
    <property type="project" value="InterPro"/>
</dbReference>
<dbReference type="GO" id="GO:0004521">
    <property type="term" value="F:RNA endonuclease activity"/>
    <property type="evidence" value="ECO:0007669"/>
    <property type="project" value="UniProtKB-UniRule"/>
</dbReference>
<dbReference type="GO" id="GO:0008270">
    <property type="term" value="F:zinc ion binding"/>
    <property type="evidence" value="ECO:0007669"/>
    <property type="project" value="UniProtKB-UniRule"/>
</dbReference>
<dbReference type="GO" id="GO:0006364">
    <property type="term" value="P:rRNA processing"/>
    <property type="evidence" value="ECO:0007669"/>
    <property type="project" value="UniProtKB-UniRule"/>
</dbReference>
<dbReference type="Gene3D" id="3.40.390.30">
    <property type="entry name" value="Metalloproteases ('zincins'), catalytic domain"/>
    <property type="match status" value="1"/>
</dbReference>
<dbReference type="HAMAP" id="MF_00009">
    <property type="entry name" value="Endoribonucl_YbeY"/>
    <property type="match status" value="1"/>
</dbReference>
<dbReference type="InterPro" id="IPR023091">
    <property type="entry name" value="MetalPrtase_cat_dom_sf_prd"/>
</dbReference>
<dbReference type="InterPro" id="IPR002036">
    <property type="entry name" value="YbeY"/>
</dbReference>
<dbReference type="InterPro" id="IPR020549">
    <property type="entry name" value="YbeY_CS"/>
</dbReference>
<dbReference type="NCBIfam" id="TIGR00043">
    <property type="entry name" value="rRNA maturation RNase YbeY"/>
    <property type="match status" value="1"/>
</dbReference>
<dbReference type="PANTHER" id="PTHR46986">
    <property type="entry name" value="ENDORIBONUCLEASE YBEY, CHLOROPLASTIC"/>
    <property type="match status" value="1"/>
</dbReference>
<dbReference type="PANTHER" id="PTHR46986:SF1">
    <property type="entry name" value="ENDORIBONUCLEASE YBEY, CHLOROPLASTIC"/>
    <property type="match status" value="1"/>
</dbReference>
<dbReference type="Pfam" id="PF02130">
    <property type="entry name" value="YbeY"/>
    <property type="match status" value="1"/>
</dbReference>
<dbReference type="SUPFAM" id="SSF55486">
    <property type="entry name" value="Metalloproteases ('zincins'), catalytic domain"/>
    <property type="match status" value="1"/>
</dbReference>
<dbReference type="PROSITE" id="PS01306">
    <property type="entry name" value="UPF0054"/>
    <property type="match status" value="1"/>
</dbReference>